<proteinExistence type="inferred from homology"/>
<accession>A4J2L1</accession>
<sequence length="87" mass="9886">MPEQDEVITLIDEDGAEHDFNVIDVIEVEGSEYAILLPVEDESDEAVILKFAKDEDDNEILVDIESDEEWEKVADAWEEMVTAEEGE</sequence>
<reference key="1">
    <citation type="submission" date="2007-03" db="EMBL/GenBank/DDBJ databases">
        <title>Complete sequence of Desulfotomaculum reducens MI-1.</title>
        <authorList>
            <consortium name="US DOE Joint Genome Institute"/>
            <person name="Copeland A."/>
            <person name="Lucas S."/>
            <person name="Lapidus A."/>
            <person name="Barry K."/>
            <person name="Detter J.C."/>
            <person name="Glavina del Rio T."/>
            <person name="Hammon N."/>
            <person name="Israni S."/>
            <person name="Dalin E."/>
            <person name="Tice H."/>
            <person name="Pitluck S."/>
            <person name="Sims D."/>
            <person name="Brettin T."/>
            <person name="Bruce D."/>
            <person name="Han C."/>
            <person name="Tapia R."/>
            <person name="Schmutz J."/>
            <person name="Larimer F."/>
            <person name="Land M."/>
            <person name="Hauser L."/>
            <person name="Kyrpides N."/>
            <person name="Kim E."/>
            <person name="Tebo B.M."/>
            <person name="Richardson P."/>
        </authorList>
    </citation>
    <scope>NUCLEOTIDE SEQUENCE [LARGE SCALE GENOMIC DNA]</scope>
    <source>
        <strain>ATCC BAA-1160 / DSM 100696 / MI-1</strain>
    </source>
</reference>
<evidence type="ECO:0000255" key="1">
    <source>
        <dbReference type="HAMAP-Rule" id="MF_01448"/>
    </source>
</evidence>
<dbReference type="EMBL" id="CP000612">
    <property type="protein sequence ID" value="ABO49314.1"/>
    <property type="molecule type" value="Genomic_DNA"/>
</dbReference>
<dbReference type="RefSeq" id="WP_011877149.1">
    <property type="nucleotide sequence ID" value="NC_009253.1"/>
</dbReference>
<dbReference type="SMR" id="A4J2L1"/>
<dbReference type="STRING" id="349161.Dred_0776"/>
<dbReference type="KEGG" id="drm:Dred_0776"/>
<dbReference type="eggNOG" id="COG3906">
    <property type="taxonomic scope" value="Bacteria"/>
</dbReference>
<dbReference type="HOGENOM" id="CLU_146610_8_1_9"/>
<dbReference type="OrthoDB" id="9811971at2"/>
<dbReference type="Proteomes" id="UP000001556">
    <property type="component" value="Chromosome"/>
</dbReference>
<dbReference type="HAMAP" id="MF_01448">
    <property type="entry name" value="UPF0473"/>
    <property type="match status" value="1"/>
</dbReference>
<dbReference type="InterPro" id="IPR009711">
    <property type="entry name" value="UPF0473"/>
</dbReference>
<dbReference type="Pfam" id="PF06949">
    <property type="entry name" value="DUF1292"/>
    <property type="match status" value="1"/>
</dbReference>
<feature type="chain" id="PRO_1000087502" description="UPF0473 protein Dred_0776">
    <location>
        <begin position="1"/>
        <end position="87"/>
    </location>
</feature>
<comment type="similarity">
    <text evidence="1">Belongs to the UPF0473 family.</text>
</comment>
<gene>
    <name type="ordered locus">Dred_0776</name>
</gene>
<name>Y776_DESRM</name>
<organism>
    <name type="scientific">Desulforamulus reducens (strain ATCC BAA-1160 / DSM 100696 / MI-1)</name>
    <name type="common">Desulfotomaculum reducens</name>
    <dbReference type="NCBI Taxonomy" id="349161"/>
    <lineage>
        <taxon>Bacteria</taxon>
        <taxon>Bacillati</taxon>
        <taxon>Bacillota</taxon>
        <taxon>Clostridia</taxon>
        <taxon>Eubacteriales</taxon>
        <taxon>Peptococcaceae</taxon>
        <taxon>Desulforamulus</taxon>
    </lineage>
</organism>
<protein>
    <recommendedName>
        <fullName evidence="1">UPF0473 protein Dred_0776</fullName>
    </recommendedName>
</protein>
<keyword id="KW-1185">Reference proteome</keyword>